<proteinExistence type="evidence at protein level"/>
<accession>Q921N8</accession>
<evidence type="ECO:0000250" key="1">
    <source>
        <dbReference type="UniProtKB" id="Q13227"/>
    </source>
</evidence>
<evidence type="ECO:0000255" key="2"/>
<evidence type="ECO:0000256" key="3">
    <source>
        <dbReference type="SAM" id="MobiDB-lite"/>
    </source>
</evidence>
<evidence type="ECO:0000269" key="4">
    <source>
    </source>
</evidence>
<evidence type="ECO:0000269" key="5">
    <source>
    </source>
</evidence>
<evidence type="ECO:0000269" key="6">
    <source>
    </source>
</evidence>
<evidence type="ECO:0000269" key="7">
    <source>
    </source>
</evidence>
<evidence type="ECO:0000269" key="8">
    <source>
    </source>
</evidence>
<evidence type="ECO:0000269" key="9">
    <source>
    </source>
</evidence>
<evidence type="ECO:0000269" key="10">
    <source>
    </source>
</evidence>
<evidence type="ECO:0000269" key="11">
    <source>
    </source>
</evidence>
<evidence type="ECO:0000269" key="12">
    <source>
    </source>
</evidence>
<evidence type="ECO:0000269" key="13">
    <source>
    </source>
</evidence>
<evidence type="ECO:0000303" key="14">
    <source>
    </source>
</evidence>
<evidence type="ECO:0000312" key="15">
    <source>
        <dbReference type="MGI" id="MGI:1891751"/>
    </source>
</evidence>
<evidence type="ECO:0007744" key="16">
    <source>
    </source>
</evidence>
<name>GPS2_MOUSE</name>
<comment type="function">
    <text evidence="1 4 5 6 7 8 10 11 12 13">Key regulator of inflammation, lipid metabolism and mitochondrion homeostasis that acts by inhibiting the activity of the ubiquitin-conjugating enzyme UBE2N/Ubc13, thereby inhibiting 'Lys-63'-linked ubiquitination (PubMed:22424771, PubMed:24953653, PubMed:28039360, PubMed:28123943, PubMed:29499132). In the nucleus, can both acts as a corepressor and coactivator of transcription, depending on the context (PubMed:18218630, PubMed:24953653, PubMed:25519902, PubMed:27270589, PubMed:28039360). Acts as a transcription coactivator in adipocytes by promoting the recruitment of PPARG to promoters: acts by inhibiting the activity of the ubiquitin-conjugating enzyme UBE2N/Ubc13, leading to stabilization of KDM4A and subsequent histone H3 'Lys-9' (H3K9) demethylation (PubMed:22666460, PubMed:24953653). Promotes cholesterol efflux by acting as a transcription coactivator (By similarity). Acts as a regulator of B-cell development by inhibiting UBE2N/Ubc13, thereby restricting the activation of Toll-like receptors (TLRs) and B-cell antigen receptors (BCRs) signaling pathways (PubMed:28039360). Acts as a key mediator of mitochondrial stress response: in response to mitochondrial depolarization, relocates from the mitochondria to the nucleus following desumoylation and specifically promotes expression of nuclear-encoded mitochondrial genes (PubMed:29499132). Promotes transcription of nuclear-encoded mitochondrial genes by inhibiting UBE2N/Ubc13 (PubMed:29499132). Can also act as a corepressor as part of the N-Cor repressor complex by repressing active PPARG (PubMed:25519902). Plays an anti-inflammatory role in macrophages and is required for insulin sensitivity by acting as a corepressor (PubMed:27270589). Plays an anti-inflammatory role during the hepatic acute phase response by interacting with sumoylated NR1H2 and NR5A2 proteins, thereby preventing N-Cor corepressor complex dissociation (By similarity). In the cytosol, also plays a non-transcriptional role by regulating insulin signaling and pro-inflammatory pathways (PubMed:22424771, PubMed:28123943). In the cytoplasm, acts as a negative regulator of inflammation by inhibiting the pro-inflammatory TNF-alpha pathway; acts by repressing UBE2N/Ubc13 activity (PubMed:22424771). In the cytoplasm of adipocytes, restricts the activation of insulin signaling via inhibition of UBE2N/Ubc13-mediated ubiquitination of AKT (PubMed:28123943). Able to suppress G-protein- and mitogen-activated protein kinase-mediated signal transduction (By similarity).</text>
</comment>
<comment type="subunit">
    <text evidence="1 4 5 8 9">Component of the N-Cor repressor complex, at least composed of NCOR1, NCOR2, HDAC3, TBL1X, TBL1R, CORO2A and GPS2 (PubMed:25519902). Interacts (when sumoylated at Lys-71) with TBL1X; leading to protect GPS2 from degradation by the proteasome (PubMed:26070566). Interacts with UBE2N; leading to inhibit UBE2N/Ubc13 activity (PubMed:22424771). Interacts with TRAF1 (PubMed:22424771). Interacts with TRAF2 (PubMed:22424771). Interacts with TRAF6 (PubMed:22424771). Interacts with PPARG (when in the liganded conformation) (PubMed:25519902). Interacts with (sumoylated) NR1H2; interaction with sumoylated NR1H2 and NR5A2 onto hepatic acute phase protein promoters prevents N-Cor corepressor complex dissociation (By similarity). Interacts with (sumoylated) NR5A2; interaction with sumoylated NR1H2 and NR5A2 onto hepatic acute phase protein promoters prevents N-Cor corepressor complex dissociation (By similarity). Interacts with NR1H3 (By similarity). Interacts with RFX4 (PubMed:18218630). Interacts with ANKRD26 (By similarity).</text>
</comment>
<comment type="subcellular location">
    <subcellularLocation>
        <location evidence="4 5 6 9 13">Nucleus</location>
    </subcellularLocation>
    <subcellularLocation>
        <location evidence="13">Mitochondrion</location>
    </subcellularLocation>
    <subcellularLocation>
        <location evidence="5">Cytoplasm</location>
        <location evidence="5">Cytosol</location>
    </subcellularLocation>
    <text evidence="1 13">Sumoylation regulates the subcellular location (PubMed:29499132). Relocates from the mitochondria to the nucleus following desumoylation, leading to mediate mitochondrial stress response (PubMed:29499132).</text>
</comment>
<comment type="PTM">
    <text evidence="1 9 13">Sumoylation regulates its subcellular location (PubMed:26070566, PubMed:29499132). Sumoylation at Lys-45 and Lys-71 regulates the shuttling between the cytoplasm and the nucleus (By similarity). Sumoylation at Lys-71 is required for interaction with TBL1X (PubMed:26070566). Sumoylated at Lys-45 and Lys-71 in mitochondrion (PubMed:29499132). Desumoylation by SENP1 leads to relocation from the mitochondria to the nucleus (PubMed:29499132).</text>
</comment>
<comment type="PTM">
    <text evidence="9">Ubiquitinated at the C-terminus by SIAH2; leading to its degradation by the proteasome. Interaction with TBL1X and methylation at Arg-323 protect GPS2 against ubiquitination and degradation.</text>
</comment>
<comment type="PTM">
    <text evidence="9">Methylated at Arg-312 and Arg-323 by PRMT6. Methylation at Arg-323 protects from degradation by the proteasome.</text>
</comment>
<comment type="disruption phenotype">
    <text evidence="8 10 11 12 13">Embryonic lethality (PubMed:25519902). Embryonic fibroblast cells show reduced corepressor function of the N-CoR complex for PPARG, leading to constitutive activation of PPARG target genes and spontaneous adipogenesis of the cells (PubMed:25519902). Conditional knockout mice lacking Gps2 in B-cells show developmental defects at multiple stages of B-cell differentiation, caused by of aberrant activation of 'Lys-63'-linked ubiquitination events and altered gene expression programs downstream of the misregulated signaling pathways (PubMed:28039360). Conditional knockout mice lacking Gps2 in macrophages show inappropriate corepressor complex function, leading to enhancer activation, pro-inflammatory gene expression and hypersensitivity toward metabolic-stress signals (PubMed:27270589). Conditional knockout mice lacking Gps2 in adipose tissues show obesity associated with constitutive insulin signaling, increased lipid deposition in the white adipose tissue and improved systemic insulin sensitivity (PubMed:28123943). Conditional knockout mice lacking Gps2 in adipose tissues display reduced mitochondrial content in brown adipose tissue (PubMed:29499132).</text>
</comment>
<feature type="chain" id="PRO_0000441803" description="G protein pathway suppressor 2">
    <location>
        <begin position="1"/>
        <end position="327"/>
    </location>
</feature>
<feature type="region of interest" description="Disordered" evidence="3">
    <location>
        <begin position="26"/>
        <end position="65"/>
    </location>
</feature>
<feature type="region of interest" description="interaction with SUMO" evidence="1">
    <location>
        <begin position="61"/>
        <end position="94"/>
    </location>
</feature>
<feature type="region of interest" description="Disordered" evidence="3">
    <location>
        <begin position="178"/>
        <end position="208"/>
    </location>
</feature>
<feature type="region of interest" description="Disordered" evidence="3">
    <location>
        <begin position="253"/>
        <end position="285"/>
    </location>
</feature>
<feature type="region of interest" description="Disordered" evidence="3">
    <location>
        <begin position="300"/>
        <end position="327"/>
    </location>
</feature>
<feature type="coiled-coil region" evidence="2">
    <location>
        <begin position="14"/>
        <end position="109"/>
    </location>
</feature>
<feature type="compositionally biased region" description="Polar residues" evidence="3">
    <location>
        <begin position="253"/>
        <end position="271"/>
    </location>
</feature>
<feature type="compositionally biased region" description="Polar residues" evidence="3">
    <location>
        <begin position="317"/>
        <end position="327"/>
    </location>
</feature>
<feature type="modified residue" description="Asymmetric dimethylarginine" evidence="9 16">
    <location>
        <position position="312"/>
    </location>
</feature>
<feature type="modified residue" description="Asymmetric dimethylarginine; alternate" evidence="9 16">
    <location>
        <position position="323"/>
    </location>
</feature>
<feature type="modified residue" description="Omega-N-methylarginine; alternate" evidence="1">
    <location>
        <position position="323"/>
    </location>
</feature>
<feature type="cross-link" description="Glycyl lysine isopeptide (Lys-Gly) (interchain with G-Cter in SUMO1)" evidence="9 13">
    <location>
        <position position="45"/>
    </location>
</feature>
<feature type="cross-link" description="Glycyl lysine isopeptide (Lys-Gly) (interchain with G-Cter in SUMO1)" evidence="9 13">
    <location>
        <position position="71"/>
    </location>
</feature>
<feature type="mutagenesis site" description="Decreased stability of the protein, probably due inability to interact with TBL1X; when associated with R-71. Abolishes sumoylation; when associated with R-71." evidence="13">
    <original>K</original>
    <variation>R</variation>
    <location>
        <position position="45"/>
    </location>
</feature>
<feature type="mutagenesis site" description="Does not affect localization to the nucleus." evidence="9">
    <original>KK</original>
    <variation>AA</variation>
    <location>
        <begin position="52"/>
        <end position="53"/>
    </location>
</feature>
<feature type="mutagenesis site" description="Decreased stability of the protein, probably due inability to interact with TBL1X; when associated with R-45. Abolishes sumoylation; when associated with R-45." evidence="9 13">
    <original>K</original>
    <variation>R</variation>
    <location>
        <position position="71"/>
    </location>
</feature>
<feature type="mutagenesis site" description="Increased stability due to impaired ubiquitination; when associated with A-300 and A-327." evidence="9">
    <original>K</original>
    <variation>A</variation>
    <location>
        <position position="254"/>
    </location>
</feature>
<feature type="mutagenesis site" description="Increased stability due to impaired ubiquitination; when associated with A-254 and A-327." evidence="9">
    <original>K</original>
    <variation>A</variation>
    <location>
        <position position="300"/>
    </location>
</feature>
<feature type="mutagenesis site" description="Abolished methylation; when associated with A-323." evidence="9">
    <original>R</original>
    <variation>A</variation>
    <location>
        <position position="312"/>
    </location>
</feature>
<feature type="mutagenesis site" description="Promotes ubiquitination and degradation by the proteasome. Abolished methylation; when associated with A-312." evidence="9">
    <original>R</original>
    <variation>A</variation>
    <location>
        <position position="323"/>
    </location>
</feature>
<feature type="mutagenesis site" description="Increased stability due to impaired ubiquitination; when associated with A-254 and A-300." evidence="9">
    <original>K</original>
    <variation>A</variation>
    <location>
        <position position="327"/>
    </location>
</feature>
<keyword id="KW-0010">Activator</keyword>
<keyword id="KW-0175">Coiled coil</keyword>
<keyword id="KW-0963">Cytoplasm</keyword>
<keyword id="KW-1017">Isopeptide bond</keyword>
<keyword id="KW-0488">Methylation</keyword>
<keyword id="KW-0496">Mitochondrion</keyword>
<keyword id="KW-0539">Nucleus</keyword>
<keyword id="KW-1185">Reference proteome</keyword>
<keyword id="KW-0678">Repressor</keyword>
<keyword id="KW-0804">Transcription</keyword>
<keyword id="KW-0805">Transcription regulation</keyword>
<keyword id="KW-0832">Ubl conjugation</keyword>
<organism>
    <name type="scientific">Mus musculus</name>
    <name type="common">Mouse</name>
    <dbReference type="NCBI Taxonomy" id="10090"/>
    <lineage>
        <taxon>Eukaryota</taxon>
        <taxon>Metazoa</taxon>
        <taxon>Chordata</taxon>
        <taxon>Craniata</taxon>
        <taxon>Vertebrata</taxon>
        <taxon>Euteleostomi</taxon>
        <taxon>Mammalia</taxon>
        <taxon>Eutheria</taxon>
        <taxon>Euarchontoglires</taxon>
        <taxon>Glires</taxon>
        <taxon>Rodentia</taxon>
        <taxon>Myomorpha</taxon>
        <taxon>Muroidea</taxon>
        <taxon>Muridae</taxon>
        <taxon>Murinae</taxon>
        <taxon>Mus</taxon>
        <taxon>Mus</taxon>
    </lineage>
</organism>
<gene>
    <name evidence="14 15" type="primary">Gps2</name>
</gene>
<dbReference type="EMBL" id="AL596185">
    <property type="status" value="NOT_ANNOTATED_CDS"/>
    <property type="molecule type" value="Genomic_DNA"/>
</dbReference>
<dbReference type="EMBL" id="CH466596">
    <property type="protein sequence ID" value="EDL12472.1"/>
    <property type="molecule type" value="Genomic_DNA"/>
</dbReference>
<dbReference type="EMBL" id="CH466596">
    <property type="protein sequence ID" value="EDL12474.1"/>
    <property type="molecule type" value="Genomic_DNA"/>
</dbReference>
<dbReference type="EMBL" id="BC011317">
    <property type="protein sequence ID" value="AAH11317.1"/>
    <property type="molecule type" value="mRNA"/>
</dbReference>
<dbReference type="EMBL" id="BC138879">
    <property type="protein sequence ID" value="AAI38880.1"/>
    <property type="molecule type" value="mRNA"/>
</dbReference>
<dbReference type="EMBL" id="BC138880">
    <property type="protein sequence ID" value="AAI38881.1"/>
    <property type="molecule type" value="mRNA"/>
</dbReference>
<dbReference type="CCDS" id="CCDS24922.1"/>
<dbReference type="RefSeq" id="NP_001344835.1">
    <property type="nucleotide sequence ID" value="NM_001357906.2"/>
</dbReference>
<dbReference type="RefSeq" id="NP_062700.2">
    <property type="nucleotide sequence ID" value="NM_019726.3"/>
</dbReference>
<dbReference type="RefSeq" id="XP_006533850.1">
    <property type="nucleotide sequence ID" value="XM_006533787.2"/>
</dbReference>
<dbReference type="SMR" id="Q921N8"/>
<dbReference type="CORUM" id="Q921N8"/>
<dbReference type="FunCoup" id="Q921N8">
    <property type="interactions" value="1823"/>
</dbReference>
<dbReference type="STRING" id="10090.ENSMUSP00000072389"/>
<dbReference type="iPTMnet" id="Q921N8"/>
<dbReference type="PhosphoSitePlus" id="Q921N8"/>
<dbReference type="PaxDb" id="10090-ENSMUSP00000054072"/>
<dbReference type="PeptideAtlas" id="Q921N8"/>
<dbReference type="ProteomicsDB" id="271073"/>
<dbReference type="Pumba" id="Q921N8"/>
<dbReference type="Antibodypedia" id="11906">
    <property type="antibodies" value="219 antibodies from 26 providers"/>
</dbReference>
<dbReference type="DNASU" id="56310"/>
<dbReference type="Ensembl" id="ENSMUST00000057884.6">
    <property type="protein sequence ID" value="ENSMUSP00000054072.6"/>
    <property type="gene ID" value="ENSMUSG00000023170.15"/>
</dbReference>
<dbReference type="Ensembl" id="ENSMUST00000072581.9">
    <property type="protein sequence ID" value="ENSMUSP00000072389.3"/>
    <property type="gene ID" value="ENSMUSG00000023170.15"/>
</dbReference>
<dbReference type="Ensembl" id="ENSMUST00000116358.8">
    <property type="protein sequence ID" value="ENSMUSP00000112062.2"/>
    <property type="gene ID" value="ENSMUSG00000023170.15"/>
</dbReference>
<dbReference type="GeneID" id="56310"/>
<dbReference type="KEGG" id="mmu:56310"/>
<dbReference type="UCSC" id="uc007jsp.1">
    <property type="organism name" value="mouse"/>
</dbReference>
<dbReference type="AGR" id="MGI:1891751"/>
<dbReference type="CTD" id="2874"/>
<dbReference type="MGI" id="MGI:1891751">
    <property type="gene designation" value="Gps2"/>
</dbReference>
<dbReference type="VEuPathDB" id="HostDB:ENSMUSG00000023170"/>
<dbReference type="eggNOG" id="ENOG502RFJB">
    <property type="taxonomic scope" value="Eukaryota"/>
</dbReference>
<dbReference type="GeneTree" id="ENSGT00390000004049"/>
<dbReference type="HOGENOM" id="CLU_081471_0_0_1"/>
<dbReference type="InParanoid" id="Q921N8"/>
<dbReference type="OMA" id="QIEHANQ"/>
<dbReference type="OrthoDB" id="10038194at2759"/>
<dbReference type="PhylomeDB" id="Q921N8"/>
<dbReference type="TreeFam" id="TF329067"/>
<dbReference type="Reactome" id="R-MMU-3214815">
    <property type="pathway name" value="HDACs deacetylate histones"/>
</dbReference>
<dbReference type="Reactome" id="R-MMU-9029569">
    <property type="pathway name" value="NR1H3 &amp; NR1H2 regulate gene expression linked to cholesterol transport and efflux"/>
</dbReference>
<dbReference type="Reactome" id="R-MMU-9841922">
    <property type="pathway name" value="MLL4 and MLL3 complexes regulate expression of PPARG target genes in adipogenesis and hepatic steatosis"/>
</dbReference>
<dbReference type="BioGRID-ORCS" id="56310">
    <property type="hits" value="12 hits in 80 CRISPR screens"/>
</dbReference>
<dbReference type="ChiTaRS" id="Gps2">
    <property type="organism name" value="mouse"/>
</dbReference>
<dbReference type="PRO" id="PR:Q921N8"/>
<dbReference type="Proteomes" id="UP000000589">
    <property type="component" value="Chromosome 11"/>
</dbReference>
<dbReference type="RNAct" id="Q921N8">
    <property type="molecule type" value="protein"/>
</dbReference>
<dbReference type="Bgee" id="ENSMUSG00000023170">
    <property type="expression patterns" value="Expressed in retinal neural layer and 228 other cell types or tissues"/>
</dbReference>
<dbReference type="ExpressionAtlas" id="Q921N8">
    <property type="expression patterns" value="baseline and differential"/>
</dbReference>
<dbReference type="GO" id="GO:0005737">
    <property type="term" value="C:cytoplasm"/>
    <property type="evidence" value="ECO:0000314"/>
    <property type="project" value="UniProtKB"/>
</dbReference>
<dbReference type="GO" id="GO:0005829">
    <property type="term" value="C:cytosol"/>
    <property type="evidence" value="ECO:0007669"/>
    <property type="project" value="UniProtKB-SubCell"/>
</dbReference>
<dbReference type="GO" id="GO:0005739">
    <property type="term" value="C:mitochondrion"/>
    <property type="evidence" value="ECO:0000314"/>
    <property type="project" value="UniProtKB"/>
</dbReference>
<dbReference type="GO" id="GO:0005654">
    <property type="term" value="C:nucleoplasm"/>
    <property type="evidence" value="ECO:0000304"/>
    <property type="project" value="Reactome"/>
</dbReference>
<dbReference type="GO" id="GO:0005634">
    <property type="term" value="C:nucleus"/>
    <property type="evidence" value="ECO:0000314"/>
    <property type="project" value="UniProtKB"/>
</dbReference>
<dbReference type="GO" id="GO:0017053">
    <property type="term" value="C:transcription repressor complex"/>
    <property type="evidence" value="ECO:0000314"/>
    <property type="project" value="UniProtKB"/>
</dbReference>
<dbReference type="GO" id="GO:0030332">
    <property type="term" value="F:cyclin binding"/>
    <property type="evidence" value="ECO:0007669"/>
    <property type="project" value="Ensembl"/>
</dbReference>
<dbReference type="GO" id="GO:0003713">
    <property type="term" value="F:transcription coactivator activity"/>
    <property type="evidence" value="ECO:0000314"/>
    <property type="project" value="UniProtKB"/>
</dbReference>
<dbReference type="GO" id="GO:0003714">
    <property type="term" value="F:transcription corepressor activity"/>
    <property type="evidence" value="ECO:0000314"/>
    <property type="project" value="UniProtKB"/>
</dbReference>
<dbReference type="GO" id="GO:0030183">
    <property type="term" value="P:B cell differentiation"/>
    <property type="evidence" value="ECO:0000315"/>
    <property type="project" value="UniProtKB"/>
</dbReference>
<dbReference type="GO" id="GO:0050859">
    <property type="term" value="P:negative regulation of B cell receptor signaling pathway"/>
    <property type="evidence" value="ECO:0000315"/>
    <property type="project" value="UniProtKB"/>
</dbReference>
<dbReference type="GO" id="GO:0045599">
    <property type="term" value="P:negative regulation of fat cell differentiation"/>
    <property type="evidence" value="ECO:0000315"/>
    <property type="project" value="UniProtKB"/>
</dbReference>
<dbReference type="GO" id="GO:0050728">
    <property type="term" value="P:negative regulation of inflammatory response"/>
    <property type="evidence" value="ECO:0000314"/>
    <property type="project" value="UniProtKB"/>
</dbReference>
<dbReference type="GO" id="GO:0046329">
    <property type="term" value="P:negative regulation of JNK cascade"/>
    <property type="evidence" value="ECO:0000315"/>
    <property type="project" value="UniProtKB"/>
</dbReference>
<dbReference type="GO" id="GO:1900045">
    <property type="term" value="P:negative regulation of protein K63-linked ubiquitination"/>
    <property type="evidence" value="ECO:0000314"/>
    <property type="project" value="UniProtKB"/>
</dbReference>
<dbReference type="GO" id="GO:0034122">
    <property type="term" value="P:negative regulation of toll-like receptor signaling pathway"/>
    <property type="evidence" value="ECO:0000315"/>
    <property type="project" value="UniProtKB"/>
</dbReference>
<dbReference type="GO" id="GO:0000122">
    <property type="term" value="P:negative regulation of transcription by RNA polymerase II"/>
    <property type="evidence" value="ECO:0000314"/>
    <property type="project" value="UniProtKB"/>
</dbReference>
<dbReference type="GO" id="GO:0010804">
    <property type="term" value="P:negative regulation of tumor necrosis factor-mediated signaling pathway"/>
    <property type="evidence" value="ECO:0000315"/>
    <property type="project" value="UniProtKB"/>
</dbReference>
<dbReference type="GO" id="GO:0010875">
    <property type="term" value="P:positive regulation of cholesterol efflux"/>
    <property type="evidence" value="ECO:0000250"/>
    <property type="project" value="UniProtKB"/>
</dbReference>
<dbReference type="GO" id="GO:0035360">
    <property type="term" value="P:positive regulation of peroxisome proliferator activated receptor signaling pathway"/>
    <property type="evidence" value="ECO:0000314"/>
    <property type="project" value="UniProtKB"/>
</dbReference>
<dbReference type="GO" id="GO:0045944">
    <property type="term" value="P:positive regulation of transcription by RNA polymerase II"/>
    <property type="evidence" value="ECO:0000314"/>
    <property type="project" value="UniProtKB"/>
</dbReference>
<dbReference type="GO" id="GO:0045598">
    <property type="term" value="P:regulation of fat cell differentiation"/>
    <property type="evidence" value="ECO:0000314"/>
    <property type="project" value="UniProtKB"/>
</dbReference>
<dbReference type="GO" id="GO:0019216">
    <property type="term" value="P:regulation of lipid metabolic process"/>
    <property type="evidence" value="ECO:0000314"/>
    <property type="project" value="UniProtKB"/>
</dbReference>
<dbReference type="GO" id="GO:0098780">
    <property type="term" value="P:response to mitochondrial depolarisation"/>
    <property type="evidence" value="ECO:0000314"/>
    <property type="project" value="UniProtKB"/>
</dbReference>
<dbReference type="CDD" id="cd22249">
    <property type="entry name" value="UDM1_RNF168_RNF169-like"/>
    <property type="match status" value="1"/>
</dbReference>
<dbReference type="InterPro" id="IPR026094">
    <property type="entry name" value="GPS2"/>
</dbReference>
<dbReference type="PANTHER" id="PTHR22654">
    <property type="entry name" value="G PROTEIN PATHWAY SUPPRESSOR 2"/>
    <property type="match status" value="1"/>
</dbReference>
<dbReference type="PANTHER" id="PTHR22654:SF2">
    <property type="entry name" value="G PROTEIN PATHWAY SUPPRESSOR 2"/>
    <property type="match status" value="1"/>
</dbReference>
<dbReference type="Pfam" id="PF15991">
    <property type="entry name" value="G_path_suppress"/>
    <property type="match status" value="1"/>
</dbReference>
<protein>
    <recommendedName>
        <fullName evidence="14">G protein pathway suppressor 2</fullName>
        <shortName evidence="14">GPS-2</shortName>
    </recommendedName>
</protein>
<sequence>MPALLERPKLSNAMARALHRHIMMERERKRQEEEEVDKMMEQKMKEEQERRKKKEMEERMSLEETKEQILKLQEKLSALQEEKHQLFLQLKKVLHEEEKRRRKEQSDLTTLTSAAYQQSLTVHTGTHLLSMQGSPGGHNRPGTLMAADRAKQMFGPQVLTTRHYVGSAAAFAGTPEHGQFQGSPGGAYGTAQPPPHYGPTQPAYSPSQQLRAPSAFPAVQYLSQPQPQPYAVHGHFQPTQTGFLQPGSTLSLQKQMEHANQQTSFSDSSSLRPMHPQALHPAPGLLASPQLPVQIQAAGKSGFATTSQPGPRLPFIQHSQNPRFYHK</sequence>
<reference key="1">
    <citation type="journal article" date="2009" name="PLoS Biol.">
        <title>Lineage-specific biology revealed by a finished genome assembly of the mouse.</title>
        <authorList>
            <person name="Church D.M."/>
            <person name="Goodstadt L."/>
            <person name="Hillier L.W."/>
            <person name="Zody M.C."/>
            <person name="Goldstein S."/>
            <person name="She X."/>
            <person name="Bult C.J."/>
            <person name="Agarwala R."/>
            <person name="Cherry J.L."/>
            <person name="DiCuccio M."/>
            <person name="Hlavina W."/>
            <person name="Kapustin Y."/>
            <person name="Meric P."/>
            <person name="Maglott D."/>
            <person name="Birtle Z."/>
            <person name="Marques A.C."/>
            <person name="Graves T."/>
            <person name="Zhou S."/>
            <person name="Teague B."/>
            <person name="Potamousis K."/>
            <person name="Churas C."/>
            <person name="Place M."/>
            <person name="Herschleb J."/>
            <person name="Runnheim R."/>
            <person name="Forrest D."/>
            <person name="Amos-Landgraf J."/>
            <person name="Schwartz D.C."/>
            <person name="Cheng Z."/>
            <person name="Lindblad-Toh K."/>
            <person name="Eichler E.E."/>
            <person name="Ponting C.P."/>
        </authorList>
    </citation>
    <scope>NUCLEOTIDE SEQUENCE [LARGE SCALE GENOMIC DNA]</scope>
    <source>
        <strain>C57BL/6J</strain>
    </source>
</reference>
<reference key="2">
    <citation type="submission" date="2005-07" db="EMBL/GenBank/DDBJ databases">
        <authorList>
            <person name="Mural R.J."/>
            <person name="Adams M.D."/>
            <person name="Myers E.W."/>
            <person name="Smith H.O."/>
            <person name="Venter J.C."/>
        </authorList>
    </citation>
    <scope>NUCLEOTIDE SEQUENCE [LARGE SCALE GENOMIC DNA]</scope>
</reference>
<reference key="3">
    <citation type="journal article" date="2004" name="Genome Res.">
        <title>The status, quality, and expansion of the NIH full-length cDNA project: the Mammalian Gene Collection (MGC).</title>
        <authorList>
            <consortium name="The MGC Project Team"/>
        </authorList>
    </citation>
    <scope>NUCLEOTIDE SEQUENCE [LARGE SCALE MRNA]</scope>
    <source>
        <strain>FVB/N</strain>
    </source>
</reference>
<reference key="4">
    <citation type="journal article" date="2008" name="J. Biol. Chem.">
        <title>G-protein pathway suppressor 2 (GPS2) interacts with the regulatory factor X4 variant 3 (RFX4_v3) and functions as a transcriptional co-activator.</title>
        <authorList>
            <person name="Zhang D."/>
            <person name="Harry G.J."/>
            <person name="Blackshear P.J."/>
            <person name="Zeldin D.C."/>
        </authorList>
    </citation>
    <scope>FUNCTION</scope>
    <scope>SUBCELLULAR LOCATION</scope>
    <scope>INTERACTION WITH RFX4</scope>
</reference>
<reference key="5">
    <citation type="journal article" date="2012" name="Mol. Cell">
        <title>A protective strategy against hyperinflammatory responses requiring the nontranscriptional actions of GPS2.</title>
        <authorList>
            <person name="Cardamone M.D."/>
            <person name="Krones A."/>
            <person name="Tanasa B."/>
            <person name="Taylor H."/>
            <person name="Ricci L."/>
            <person name="Ohgi K.A."/>
            <person name="Glass C.K."/>
            <person name="Rosenfeld M.G."/>
            <person name="Perissi V."/>
        </authorList>
    </citation>
    <scope>FUNCTION</scope>
    <scope>SUBCELLULAR LOCATION</scope>
    <scope>INTERACTION WITH UBE2N; TRAF1; TRAF2 AND TRAF6</scope>
</reference>
<reference key="6">
    <citation type="journal article" date="2012" name="PLoS ONE">
        <title>ANKRD26 and its interacting partners TRIO, GPS2, HMMR and DIPA regulate adipogenesis in 3T3-L1 cells.</title>
        <authorList>
            <person name="Liu X.F."/>
            <person name="Bera T.K."/>
            <person name="Kahue C."/>
            <person name="Escobar T."/>
            <person name="Fei Z."/>
            <person name="Raciti G.A."/>
            <person name="Pastan I."/>
        </authorList>
    </citation>
    <scope>FUNCTION</scope>
    <scope>SUBCELLULAR LOCATION</scope>
</reference>
<reference key="7">
    <citation type="journal article" date="2014" name="Cell Rep.">
        <title>GPS2/KDM4A pioneering activity regulates promoter-specific recruitment of PPARgamma.</title>
        <authorList>
            <person name="Cardamone M.D."/>
            <person name="Tanasa B."/>
            <person name="Chan M."/>
            <person name="Cederquist C.T."/>
            <person name="Andricovich J."/>
            <person name="Rosenfeld M.G."/>
            <person name="Perissi V."/>
        </authorList>
    </citation>
    <scope>FUNCTION</scope>
</reference>
<reference key="8">
    <citation type="journal article" date="2014" name="Mol. Cell. Proteomics">
        <title>Immunoaffinity enrichment and mass spectrometry analysis of protein methylation.</title>
        <authorList>
            <person name="Guo A."/>
            <person name="Gu H."/>
            <person name="Zhou J."/>
            <person name="Mulhern D."/>
            <person name="Wang Y."/>
            <person name="Lee K.A."/>
            <person name="Yang V."/>
            <person name="Aguiar M."/>
            <person name="Kornhauser J."/>
            <person name="Jia X."/>
            <person name="Ren J."/>
            <person name="Beausoleil S.A."/>
            <person name="Silva J.C."/>
            <person name="Vemulapalli V."/>
            <person name="Bedford M.T."/>
            <person name="Comb M.J."/>
        </authorList>
    </citation>
    <scope>METHYLATION [LARGE SCALE ANALYSIS] AT ARG-312 AND ARG-323</scope>
    <scope>IDENTIFICATION BY MASS SPECTROMETRY [LARGE SCALE ANALYSIS]</scope>
    <source>
        <tissue>Brain</tissue>
        <tissue>Embryo</tissue>
    </source>
</reference>
<reference key="9">
    <citation type="journal article" date="2015" name="J. Biol. Chem.">
        <title>The optimal corepressor function of nuclear receptor corepressor (NCoR) for peroxisome proliferator-activated receptor gamma requires G protein pathway suppressor 2.</title>
        <authorList>
            <person name="Guo C."/>
            <person name="Li Y."/>
            <person name="Gow C.H."/>
            <person name="Wong M."/>
            <person name="Zha J."/>
            <person name="Yan C."/>
            <person name="Liu H."/>
            <person name="Wang Y."/>
            <person name="Burris T.P."/>
            <person name="Zhang J."/>
        </authorList>
    </citation>
    <scope>FUNCTION</scope>
    <scope>DISRUPTION PHENOTYPE</scope>
    <scope>IDENTIFICATION IN THE N-COR COMPLEX</scope>
    <scope>INTERACTION WITH PPARG</scope>
</reference>
<reference key="10">
    <citation type="journal article" date="2015" name="J. Biol. Chem.">
        <title>Exchange factor TBL1 and arginine methyltransferase PRMT6 cooperate in protecting G protein pathway suppressor 2 (GPS2) from proteasomal degradation.</title>
        <authorList>
            <person name="Huang J."/>
            <person name="Cardamone M.D."/>
            <person name="Johnson H.E."/>
            <person name="Neault M."/>
            <person name="Chan M."/>
            <person name="Floyd Z.E."/>
            <person name="Mallette F.A."/>
            <person name="Perissi V."/>
        </authorList>
    </citation>
    <scope>SUBCELLULAR LOCATION</scope>
    <scope>INTERACTION WITH TBL1X</scope>
    <scope>METHYLATION AT ARG-312 AND ARG-323</scope>
    <scope>SUMOYLATION AT LYS-45 AND LYS-71</scope>
    <scope>UBIQUITINATION</scope>
    <scope>MUTAGENESIS OF LYS-45; 52-LYS-LYS-53; LYS-71; LYS-254; LYS-300; ARG-312; ARG-323 AND LYS-327</scope>
</reference>
<reference key="11">
    <citation type="journal article" date="2016" name="Nat. Med.">
        <title>Loss of the co-repressor GPS2 sensitizes macrophage activation upon metabolic stress induced by obesity and type 2 diabetes.</title>
        <authorList>
            <person name="Fan R."/>
            <person name="Toubal A."/>
            <person name="Goni S."/>
            <person name="Drareni K."/>
            <person name="Huang Z."/>
            <person name="Alzaid F."/>
            <person name="Ballaire R."/>
            <person name="Ancel P."/>
            <person name="Liang N."/>
            <person name="Damdimopoulos A."/>
            <person name="Hainault I."/>
            <person name="Soprani A."/>
            <person name="Aron-Wisnewsky J."/>
            <person name="Foufelle F."/>
            <person name="Lawrence T."/>
            <person name="Gautier J.F."/>
            <person name="Venteclef N."/>
            <person name="Treuter E."/>
        </authorList>
    </citation>
    <scope>FUNCTION</scope>
    <scope>DISRUPTION PHENOTYPE</scope>
</reference>
<reference key="12">
    <citation type="journal article" date="2017" name="J. Biol. Chem.">
        <title>Inhibition of Ubc13-mediated ubiquitination by GPS2 regulates multiple stages of B Cell development.</title>
        <authorList>
            <person name="Lentucci C."/>
            <person name="Belkina A.C."/>
            <person name="Cederquist C.T."/>
            <person name="Chan M."/>
            <person name="Johnson H.E."/>
            <person name="Prasad S."/>
            <person name="Lopacinski A."/>
            <person name="Nikolajczyk B.S."/>
            <person name="Monti S."/>
            <person name="Snyder-Cappione J."/>
            <person name="Tanasa B."/>
            <person name="Cardamone M.D."/>
            <person name="Perissi V."/>
        </authorList>
    </citation>
    <scope>FUNCTION</scope>
    <scope>DISRUPTION PHENOTYPE</scope>
</reference>
<reference key="13">
    <citation type="journal article" date="2017" name="Mol. Metab.">
        <title>Systemic insulin sensitivity is regulated by GPS2 inhibition of AKT ubiquitination and activation in adipose tissue.</title>
        <authorList>
            <person name="Cederquist C.T."/>
            <person name="Lentucci C."/>
            <person name="Martinez-Calejman C."/>
            <person name="Hayashi V."/>
            <person name="Orofino J."/>
            <person name="Guertin D."/>
            <person name="Fried S.K."/>
            <person name="Lee M.J."/>
            <person name="Cardamone M.D."/>
            <person name="Perissi V."/>
        </authorList>
    </citation>
    <scope>FUNCTION</scope>
    <scope>DISRUPTION PHENOTYPE</scope>
</reference>
<reference key="14">
    <citation type="journal article" date="2018" name="Mol. Cell">
        <title>Mitochondrial retrograde signaling in mammals is mediated by the transcriptional cofactor GPS2 via direct mitochondria-to-nucleus translocation.</title>
        <authorList>
            <person name="Cardamone M.D."/>
            <person name="Tanasa B."/>
            <person name="Cederquist C.T."/>
            <person name="Huang J."/>
            <person name="Mahdaviani K."/>
            <person name="Li W."/>
            <person name="Rosenfeld M.G."/>
            <person name="Liesa M."/>
            <person name="Perissi V."/>
        </authorList>
    </citation>
    <scope>FUNCTION</scope>
    <scope>SUBCELLULAR LOCATION</scope>
    <scope>SUMOYLATION AT LYS-45 AND LYS-71</scope>
    <scope>MUTAGENESIS OF LYS-45 AND LYS-71</scope>
</reference>